<accession>Q979N7</accession>
<organism>
    <name type="scientific">Thermoplasma volcanium (strain ATCC 51530 / DSM 4299 / JCM 9571 / NBRC 15438 / GSS1)</name>
    <dbReference type="NCBI Taxonomy" id="273116"/>
    <lineage>
        <taxon>Archaea</taxon>
        <taxon>Methanobacteriati</taxon>
        <taxon>Thermoplasmatota</taxon>
        <taxon>Thermoplasmata</taxon>
        <taxon>Thermoplasmatales</taxon>
        <taxon>Thermoplasmataceae</taxon>
        <taxon>Thermoplasma</taxon>
    </lineage>
</organism>
<comment type="function">
    <text evidence="1">Thiol-specific peroxidase that catalyzes the reduction of hydrogen peroxide and organic hydroperoxides to water and alcohols, respectively. Plays a role in cell protection against oxidative stress by detoxifying peroxides.</text>
</comment>
<comment type="catalytic activity">
    <reaction evidence="1">
        <text>a hydroperoxide + [thioredoxin]-dithiol = an alcohol + [thioredoxin]-disulfide + H2O</text>
        <dbReference type="Rhea" id="RHEA:62620"/>
        <dbReference type="Rhea" id="RHEA-COMP:10698"/>
        <dbReference type="Rhea" id="RHEA-COMP:10700"/>
        <dbReference type="ChEBI" id="CHEBI:15377"/>
        <dbReference type="ChEBI" id="CHEBI:29950"/>
        <dbReference type="ChEBI" id="CHEBI:30879"/>
        <dbReference type="ChEBI" id="CHEBI:35924"/>
        <dbReference type="ChEBI" id="CHEBI:50058"/>
        <dbReference type="EC" id="1.11.1.24"/>
    </reaction>
</comment>
<comment type="subunit">
    <text evidence="1">Homodecamer. Pentamer of dimers that assemble into a ring structure.</text>
</comment>
<comment type="subcellular location">
    <subcellularLocation>
        <location evidence="1">Cytoplasm</location>
    </subcellularLocation>
</comment>
<comment type="miscellaneous">
    <text evidence="1">The active site is a conserved redox-active cysteine residue, the peroxidatic cysteine (C(P)), which makes the nucleophilic attack on the peroxide substrate. The peroxide oxidizes the C(P)-SH to cysteine sulfenic acid (C(P)-SOH), which then reacts with another cysteine residue, the resolving cysteine (C(R)), to form a disulfide bridge. The disulfide is subsequently reduced by an appropriate electron donor to complete the catalytic cycle. In this 1-Cys peroxiredoxin, no C(R) is present and C(P) instead forms a disulfide with a cysteine from another protein or with a small thiol molecule.</text>
</comment>
<comment type="similarity">
    <text evidence="1">Belongs to the peroxiredoxin family. Prx6 subfamily.</text>
</comment>
<name>TDXH_THEVO</name>
<evidence type="ECO:0000255" key="1">
    <source>
        <dbReference type="HAMAP-Rule" id="MF_00401"/>
    </source>
</evidence>
<keyword id="KW-0049">Antioxidant</keyword>
<keyword id="KW-0963">Cytoplasm</keyword>
<keyword id="KW-0560">Oxidoreductase</keyword>
<keyword id="KW-0575">Peroxidase</keyword>
<keyword id="KW-0676">Redox-active center</keyword>
<sequence>MPVVLGQKAPDFTVNTSKGPITLSNYRGKWVLLFSHPGDFTPVCTTEFIAFTERYEDFQKLGVELIGLSIDSVFSHIAWIRDIKEHFGIDIPFPIIADIDKEVAREYNLIDEKSGATVRGVFIIDPNQIVRWMIYYPAETGRNIEEIIRVIKALQFNWDRKLATPANWQPGQEGIEPAPTTVDSSFKRDNEQGVKTWYLKFVK</sequence>
<proteinExistence type="inferred from homology"/>
<feature type="chain" id="PRO_0000135174" description="Peroxiredoxin">
    <location>
        <begin position="1"/>
        <end position="203"/>
    </location>
</feature>
<feature type="domain" description="Thioredoxin" evidence="1">
    <location>
        <begin position="3"/>
        <end position="156"/>
    </location>
</feature>
<feature type="active site" description="Cysteine sulfenic acid (-SOH) intermediate" evidence="1">
    <location>
        <position position="44"/>
    </location>
</feature>
<feature type="binding site" evidence="1">
    <location>
        <position position="119"/>
    </location>
    <ligand>
        <name>substrate</name>
    </ligand>
</feature>
<dbReference type="EC" id="1.11.1.24" evidence="1"/>
<dbReference type="EMBL" id="BA000011">
    <property type="protein sequence ID" value="BAB60265.1"/>
    <property type="molecule type" value="Genomic_DNA"/>
</dbReference>
<dbReference type="RefSeq" id="WP_010917357.1">
    <property type="nucleotide sequence ID" value="NC_002689.2"/>
</dbReference>
<dbReference type="SMR" id="Q979N7"/>
<dbReference type="STRING" id="273116.gene:9381922"/>
<dbReference type="PaxDb" id="273116-14325361"/>
<dbReference type="GeneID" id="1441239"/>
<dbReference type="KEGG" id="tvo:TVG1154375"/>
<dbReference type="eggNOG" id="arCOG00312">
    <property type="taxonomic scope" value="Archaea"/>
</dbReference>
<dbReference type="HOGENOM" id="CLU_042529_4_4_2"/>
<dbReference type="OrthoDB" id="6924at2157"/>
<dbReference type="PhylomeDB" id="Q979N7"/>
<dbReference type="Proteomes" id="UP000001017">
    <property type="component" value="Chromosome"/>
</dbReference>
<dbReference type="GO" id="GO:0005829">
    <property type="term" value="C:cytosol"/>
    <property type="evidence" value="ECO:0007669"/>
    <property type="project" value="TreeGrafter"/>
</dbReference>
<dbReference type="GO" id="GO:0008379">
    <property type="term" value="F:thioredoxin peroxidase activity"/>
    <property type="evidence" value="ECO:0007669"/>
    <property type="project" value="TreeGrafter"/>
</dbReference>
<dbReference type="GO" id="GO:0045454">
    <property type="term" value="P:cell redox homeostasis"/>
    <property type="evidence" value="ECO:0007669"/>
    <property type="project" value="TreeGrafter"/>
</dbReference>
<dbReference type="GO" id="GO:0033554">
    <property type="term" value="P:cellular response to stress"/>
    <property type="evidence" value="ECO:0007669"/>
    <property type="project" value="TreeGrafter"/>
</dbReference>
<dbReference type="GO" id="GO:0042744">
    <property type="term" value="P:hydrogen peroxide catabolic process"/>
    <property type="evidence" value="ECO:0007669"/>
    <property type="project" value="TreeGrafter"/>
</dbReference>
<dbReference type="GO" id="GO:0006979">
    <property type="term" value="P:response to oxidative stress"/>
    <property type="evidence" value="ECO:0007669"/>
    <property type="project" value="TreeGrafter"/>
</dbReference>
<dbReference type="CDD" id="cd03016">
    <property type="entry name" value="PRX_1cys"/>
    <property type="match status" value="1"/>
</dbReference>
<dbReference type="FunFam" id="3.40.30.10:FF:000011">
    <property type="entry name" value="Peroxiredoxin PRX1"/>
    <property type="match status" value="1"/>
</dbReference>
<dbReference type="Gene3D" id="3.40.30.10">
    <property type="entry name" value="Glutaredoxin"/>
    <property type="match status" value="1"/>
</dbReference>
<dbReference type="HAMAP" id="MF_00401">
    <property type="entry name" value="Peroxiredoxin"/>
    <property type="match status" value="1"/>
</dbReference>
<dbReference type="InterPro" id="IPR000866">
    <property type="entry name" value="AhpC/TSA"/>
</dbReference>
<dbReference type="InterPro" id="IPR050217">
    <property type="entry name" value="Peroxiredoxin"/>
</dbReference>
<dbReference type="InterPro" id="IPR024706">
    <property type="entry name" value="Peroxiredoxin_AhpC-typ"/>
</dbReference>
<dbReference type="InterPro" id="IPR019479">
    <property type="entry name" value="Peroxiredoxin_C"/>
</dbReference>
<dbReference type="InterPro" id="IPR022915">
    <property type="entry name" value="Peroxiredoxin_TDXH"/>
</dbReference>
<dbReference type="InterPro" id="IPR045020">
    <property type="entry name" value="PRX_1cys"/>
</dbReference>
<dbReference type="InterPro" id="IPR036249">
    <property type="entry name" value="Thioredoxin-like_sf"/>
</dbReference>
<dbReference type="InterPro" id="IPR013766">
    <property type="entry name" value="Thioredoxin_domain"/>
</dbReference>
<dbReference type="NCBIfam" id="NF009668">
    <property type="entry name" value="PRK13189.1"/>
    <property type="match status" value="1"/>
</dbReference>
<dbReference type="NCBIfam" id="NF009669">
    <property type="entry name" value="PRK13190.1"/>
    <property type="match status" value="1"/>
</dbReference>
<dbReference type="PANTHER" id="PTHR10681">
    <property type="entry name" value="THIOREDOXIN PEROXIDASE"/>
    <property type="match status" value="1"/>
</dbReference>
<dbReference type="PANTHER" id="PTHR10681:SF128">
    <property type="entry name" value="THIOREDOXIN-DEPENDENT PEROXIDE REDUCTASE, MITOCHONDRIAL"/>
    <property type="match status" value="1"/>
</dbReference>
<dbReference type="Pfam" id="PF10417">
    <property type="entry name" value="1-cysPrx_C"/>
    <property type="match status" value="1"/>
</dbReference>
<dbReference type="Pfam" id="PF00578">
    <property type="entry name" value="AhpC-TSA"/>
    <property type="match status" value="1"/>
</dbReference>
<dbReference type="PIRSF" id="PIRSF000239">
    <property type="entry name" value="AHPC"/>
    <property type="match status" value="1"/>
</dbReference>
<dbReference type="SUPFAM" id="SSF52833">
    <property type="entry name" value="Thioredoxin-like"/>
    <property type="match status" value="1"/>
</dbReference>
<dbReference type="PROSITE" id="PS51352">
    <property type="entry name" value="THIOREDOXIN_2"/>
    <property type="match status" value="1"/>
</dbReference>
<reference key="1">
    <citation type="journal article" date="2000" name="Proc. Natl. Acad. Sci. U.S.A.">
        <title>Archaeal adaptation to higher temperatures revealed by genomic sequence of Thermoplasma volcanium.</title>
        <authorList>
            <person name="Kawashima T."/>
            <person name="Amano N."/>
            <person name="Koike H."/>
            <person name="Makino S."/>
            <person name="Higuchi S."/>
            <person name="Kawashima-Ohya Y."/>
            <person name="Watanabe K."/>
            <person name="Yamazaki M."/>
            <person name="Kanehori K."/>
            <person name="Kawamoto T."/>
            <person name="Nunoshiba T."/>
            <person name="Yamamoto Y."/>
            <person name="Aramaki H."/>
            <person name="Makino K."/>
            <person name="Suzuki M."/>
        </authorList>
    </citation>
    <scope>NUCLEOTIDE SEQUENCE [LARGE SCALE GENOMIC DNA]</scope>
    <source>
        <strain>ATCC 51530 / DSM 4299 / JCM 9571 / NBRC 15438 / GSS1</strain>
    </source>
</reference>
<protein>
    <recommendedName>
        <fullName evidence="1">Peroxiredoxin</fullName>
        <ecNumber evidence="1">1.11.1.24</ecNumber>
    </recommendedName>
    <alternativeName>
        <fullName evidence="1">Thioredoxin-dependent peroxiredoxin</fullName>
    </alternativeName>
</protein>
<gene>
    <name type="ordered locus">TV1123</name>
    <name type="ORF">TVG1154375</name>
</gene>